<organism>
    <name type="scientific">Listeria monocytogenes serotype 4a (strain HCC23)</name>
    <dbReference type="NCBI Taxonomy" id="552536"/>
    <lineage>
        <taxon>Bacteria</taxon>
        <taxon>Bacillati</taxon>
        <taxon>Bacillota</taxon>
        <taxon>Bacilli</taxon>
        <taxon>Bacillales</taxon>
        <taxon>Listeriaceae</taxon>
        <taxon>Listeria</taxon>
    </lineage>
</organism>
<accession>B8DE15</accession>
<feature type="chain" id="PRO_1000118961" description="Transcription elongation factor GreA">
    <location>
        <begin position="1"/>
        <end position="160"/>
    </location>
</feature>
<feature type="coiled-coil region" evidence="1">
    <location>
        <begin position="10"/>
        <end position="37"/>
    </location>
</feature>
<proteinExistence type="inferred from homology"/>
<name>GREA_LISMH</name>
<reference key="1">
    <citation type="journal article" date="2011" name="J. Bacteriol.">
        <title>Genome sequence of lineage III Listeria monocytogenes strain HCC23.</title>
        <authorList>
            <person name="Steele C.L."/>
            <person name="Donaldson J.R."/>
            <person name="Paul D."/>
            <person name="Banes M.M."/>
            <person name="Arick T."/>
            <person name="Bridges S.M."/>
            <person name="Lawrence M.L."/>
        </authorList>
    </citation>
    <scope>NUCLEOTIDE SEQUENCE [LARGE SCALE GENOMIC DNA]</scope>
    <source>
        <strain>HCC23</strain>
    </source>
</reference>
<keyword id="KW-0175">Coiled coil</keyword>
<keyword id="KW-0238">DNA-binding</keyword>
<keyword id="KW-0804">Transcription</keyword>
<keyword id="KW-0805">Transcription regulation</keyword>
<comment type="function">
    <text evidence="1">Necessary for efficient RNA polymerase transcription elongation past template-encoded arresting sites. The arresting sites in DNA have the property of trapping a certain fraction of elongating RNA polymerases that pass through, resulting in locked ternary complexes. Cleavage of the nascent transcript by cleavage factors such as GreA or GreB allows the resumption of elongation from the new 3'terminus. GreA releases sequences of 2 to 3 nucleotides.</text>
</comment>
<comment type="similarity">
    <text evidence="1">Belongs to the GreA/GreB family.</text>
</comment>
<gene>
    <name evidence="1" type="primary">greA</name>
    <name type="ordered locus">LMHCC_1074</name>
</gene>
<sequence>MATEKVFPMTLDGKAKLENELQELKTVKRKEVVERIKIARSFGDLSENSEYDSAKDEQAFVEGRITTIENMIRNAQIIDAAEAHNGLVTLGNTVTFIELPDGEEETYTIVGSAEADPFEGKISNDSPIAKGLLGHKEGEEVTIQTPAGDMSVKIEKITAS</sequence>
<dbReference type="EMBL" id="CP001175">
    <property type="protein sequence ID" value="ACK39422.1"/>
    <property type="molecule type" value="Genomic_DNA"/>
</dbReference>
<dbReference type="RefSeq" id="WP_003722004.1">
    <property type="nucleotide sequence ID" value="NC_011660.1"/>
</dbReference>
<dbReference type="SMR" id="B8DE15"/>
<dbReference type="GeneID" id="93239373"/>
<dbReference type="KEGG" id="lmh:LMHCC_1074"/>
<dbReference type="HOGENOM" id="CLU_101379_2_1_9"/>
<dbReference type="GO" id="GO:0003677">
    <property type="term" value="F:DNA binding"/>
    <property type="evidence" value="ECO:0007669"/>
    <property type="project" value="UniProtKB-UniRule"/>
</dbReference>
<dbReference type="GO" id="GO:0070063">
    <property type="term" value="F:RNA polymerase binding"/>
    <property type="evidence" value="ECO:0007669"/>
    <property type="project" value="InterPro"/>
</dbReference>
<dbReference type="GO" id="GO:0006354">
    <property type="term" value="P:DNA-templated transcription elongation"/>
    <property type="evidence" value="ECO:0007669"/>
    <property type="project" value="TreeGrafter"/>
</dbReference>
<dbReference type="GO" id="GO:0032784">
    <property type="term" value="P:regulation of DNA-templated transcription elongation"/>
    <property type="evidence" value="ECO:0007669"/>
    <property type="project" value="UniProtKB-UniRule"/>
</dbReference>
<dbReference type="FunFam" id="1.10.287.180:FF:000001">
    <property type="entry name" value="Transcription elongation factor GreA"/>
    <property type="match status" value="1"/>
</dbReference>
<dbReference type="FunFam" id="3.10.50.30:FF:000001">
    <property type="entry name" value="Transcription elongation factor GreA"/>
    <property type="match status" value="1"/>
</dbReference>
<dbReference type="Gene3D" id="3.10.50.30">
    <property type="entry name" value="Transcription elongation factor, GreA/GreB, C-terminal domain"/>
    <property type="match status" value="1"/>
</dbReference>
<dbReference type="Gene3D" id="1.10.287.180">
    <property type="entry name" value="Transcription elongation factor, GreA/GreB, N-terminal domain"/>
    <property type="match status" value="1"/>
</dbReference>
<dbReference type="HAMAP" id="MF_00105">
    <property type="entry name" value="GreA_GreB"/>
    <property type="match status" value="1"/>
</dbReference>
<dbReference type="InterPro" id="IPR036953">
    <property type="entry name" value="GreA/GreB_C_sf"/>
</dbReference>
<dbReference type="InterPro" id="IPR018151">
    <property type="entry name" value="TF_GreA/GreB_CS"/>
</dbReference>
<dbReference type="InterPro" id="IPR006359">
    <property type="entry name" value="Tscrpt_elong_fac_GreA"/>
</dbReference>
<dbReference type="InterPro" id="IPR028624">
    <property type="entry name" value="Tscrpt_elong_fac_GreA/B"/>
</dbReference>
<dbReference type="InterPro" id="IPR001437">
    <property type="entry name" value="Tscrpt_elong_fac_GreA/B_C"/>
</dbReference>
<dbReference type="InterPro" id="IPR023459">
    <property type="entry name" value="Tscrpt_elong_fac_GreA/B_fam"/>
</dbReference>
<dbReference type="InterPro" id="IPR022691">
    <property type="entry name" value="Tscrpt_elong_fac_GreA/B_N"/>
</dbReference>
<dbReference type="InterPro" id="IPR036805">
    <property type="entry name" value="Tscrpt_elong_fac_GreA/B_N_sf"/>
</dbReference>
<dbReference type="NCBIfam" id="TIGR01462">
    <property type="entry name" value="greA"/>
    <property type="match status" value="1"/>
</dbReference>
<dbReference type="NCBIfam" id="NF001261">
    <property type="entry name" value="PRK00226.1-2"/>
    <property type="match status" value="1"/>
</dbReference>
<dbReference type="NCBIfam" id="NF001263">
    <property type="entry name" value="PRK00226.1-4"/>
    <property type="match status" value="1"/>
</dbReference>
<dbReference type="PANTHER" id="PTHR30437">
    <property type="entry name" value="TRANSCRIPTION ELONGATION FACTOR GREA"/>
    <property type="match status" value="1"/>
</dbReference>
<dbReference type="PANTHER" id="PTHR30437:SF4">
    <property type="entry name" value="TRANSCRIPTION ELONGATION FACTOR GREA"/>
    <property type="match status" value="1"/>
</dbReference>
<dbReference type="Pfam" id="PF01272">
    <property type="entry name" value="GreA_GreB"/>
    <property type="match status" value="1"/>
</dbReference>
<dbReference type="Pfam" id="PF03449">
    <property type="entry name" value="GreA_GreB_N"/>
    <property type="match status" value="1"/>
</dbReference>
<dbReference type="PIRSF" id="PIRSF006092">
    <property type="entry name" value="GreA_GreB"/>
    <property type="match status" value="1"/>
</dbReference>
<dbReference type="SUPFAM" id="SSF54534">
    <property type="entry name" value="FKBP-like"/>
    <property type="match status" value="1"/>
</dbReference>
<dbReference type="SUPFAM" id="SSF46557">
    <property type="entry name" value="GreA transcript cleavage protein, N-terminal domain"/>
    <property type="match status" value="1"/>
</dbReference>
<dbReference type="PROSITE" id="PS00829">
    <property type="entry name" value="GREAB_1"/>
    <property type="match status" value="1"/>
</dbReference>
<dbReference type="PROSITE" id="PS00830">
    <property type="entry name" value="GREAB_2"/>
    <property type="match status" value="1"/>
</dbReference>
<protein>
    <recommendedName>
        <fullName evidence="1">Transcription elongation factor GreA</fullName>
    </recommendedName>
    <alternativeName>
        <fullName evidence="1">Transcript cleavage factor GreA</fullName>
    </alternativeName>
</protein>
<evidence type="ECO:0000255" key="1">
    <source>
        <dbReference type="HAMAP-Rule" id="MF_00105"/>
    </source>
</evidence>